<organism>
    <name type="scientific">Ehrlichia canis (strain Jake)</name>
    <dbReference type="NCBI Taxonomy" id="269484"/>
    <lineage>
        <taxon>Bacteria</taxon>
        <taxon>Pseudomonadati</taxon>
        <taxon>Pseudomonadota</taxon>
        <taxon>Alphaproteobacteria</taxon>
        <taxon>Rickettsiales</taxon>
        <taxon>Anaplasmataceae</taxon>
        <taxon>Ehrlichia</taxon>
    </lineage>
</organism>
<gene>
    <name evidence="1" type="primary">dnaK</name>
    <name type="ordered locus">Ecaj_0554</name>
</gene>
<evidence type="ECO:0000255" key="1">
    <source>
        <dbReference type="HAMAP-Rule" id="MF_00332"/>
    </source>
</evidence>
<evidence type="ECO:0000256" key="2">
    <source>
        <dbReference type="SAM" id="MobiDB-lite"/>
    </source>
</evidence>
<proteinExistence type="inferred from homology"/>
<feature type="chain" id="PRO_0000225961" description="Chaperone protein DnaK">
    <location>
        <begin position="1"/>
        <end position="634"/>
    </location>
</feature>
<feature type="region of interest" description="Disordered" evidence="2">
    <location>
        <begin position="597"/>
        <end position="634"/>
    </location>
</feature>
<feature type="compositionally biased region" description="Low complexity" evidence="2">
    <location>
        <begin position="600"/>
        <end position="613"/>
    </location>
</feature>
<feature type="compositionally biased region" description="Basic and acidic residues" evidence="2">
    <location>
        <begin position="616"/>
        <end position="634"/>
    </location>
</feature>
<feature type="modified residue" description="Phosphothreonine; by autocatalysis" evidence="1">
    <location>
        <position position="193"/>
    </location>
</feature>
<name>DNAK_EHRCJ</name>
<comment type="function">
    <text evidence="1">Acts as a chaperone.</text>
</comment>
<comment type="induction">
    <text evidence="1">By stress conditions e.g. heat shock.</text>
</comment>
<comment type="similarity">
    <text evidence="1">Belongs to the heat shock protein 70 family.</text>
</comment>
<dbReference type="EMBL" id="CP000107">
    <property type="protein sequence ID" value="AAZ68589.1"/>
    <property type="molecule type" value="Genomic_DNA"/>
</dbReference>
<dbReference type="RefSeq" id="WP_011304667.1">
    <property type="nucleotide sequence ID" value="NC_007354.1"/>
</dbReference>
<dbReference type="SMR" id="Q3YRR6"/>
<dbReference type="FunCoup" id="Q3YRR6">
    <property type="interactions" value="341"/>
</dbReference>
<dbReference type="STRING" id="269484.Ecaj_0554"/>
<dbReference type="KEGG" id="ecn:Ecaj_0554"/>
<dbReference type="eggNOG" id="COG0443">
    <property type="taxonomic scope" value="Bacteria"/>
</dbReference>
<dbReference type="HOGENOM" id="CLU_005965_2_1_5"/>
<dbReference type="InParanoid" id="Q3YRR6"/>
<dbReference type="Proteomes" id="UP000000435">
    <property type="component" value="Chromosome"/>
</dbReference>
<dbReference type="GO" id="GO:0005524">
    <property type="term" value="F:ATP binding"/>
    <property type="evidence" value="ECO:0007669"/>
    <property type="project" value="UniProtKB-UniRule"/>
</dbReference>
<dbReference type="GO" id="GO:0140662">
    <property type="term" value="F:ATP-dependent protein folding chaperone"/>
    <property type="evidence" value="ECO:0007669"/>
    <property type="project" value="InterPro"/>
</dbReference>
<dbReference type="GO" id="GO:0051082">
    <property type="term" value="F:unfolded protein binding"/>
    <property type="evidence" value="ECO:0007669"/>
    <property type="project" value="InterPro"/>
</dbReference>
<dbReference type="CDD" id="cd10234">
    <property type="entry name" value="ASKHA_NBD_HSP70_DnaK-like"/>
    <property type="match status" value="1"/>
</dbReference>
<dbReference type="FunFam" id="2.60.34.10:FF:000014">
    <property type="entry name" value="Chaperone protein DnaK HSP70"/>
    <property type="match status" value="1"/>
</dbReference>
<dbReference type="FunFam" id="3.30.420.40:FF:000020">
    <property type="entry name" value="Chaperone protein HscA homolog"/>
    <property type="match status" value="1"/>
</dbReference>
<dbReference type="FunFam" id="1.20.1270.10:FF:000001">
    <property type="entry name" value="Molecular chaperone DnaK"/>
    <property type="match status" value="1"/>
</dbReference>
<dbReference type="FunFam" id="3.30.420.40:FF:000004">
    <property type="entry name" value="Molecular chaperone DnaK"/>
    <property type="match status" value="1"/>
</dbReference>
<dbReference type="FunFam" id="3.90.640.10:FF:000003">
    <property type="entry name" value="Molecular chaperone DnaK"/>
    <property type="match status" value="1"/>
</dbReference>
<dbReference type="Gene3D" id="1.20.1270.10">
    <property type="match status" value="1"/>
</dbReference>
<dbReference type="Gene3D" id="3.30.420.40">
    <property type="match status" value="2"/>
</dbReference>
<dbReference type="Gene3D" id="3.90.640.10">
    <property type="entry name" value="Actin, Chain A, domain 4"/>
    <property type="match status" value="1"/>
</dbReference>
<dbReference type="Gene3D" id="2.60.34.10">
    <property type="entry name" value="Substrate Binding Domain Of DNAk, Chain A, domain 1"/>
    <property type="match status" value="1"/>
</dbReference>
<dbReference type="HAMAP" id="MF_00332">
    <property type="entry name" value="DnaK"/>
    <property type="match status" value="1"/>
</dbReference>
<dbReference type="InterPro" id="IPR043129">
    <property type="entry name" value="ATPase_NBD"/>
</dbReference>
<dbReference type="InterPro" id="IPR012725">
    <property type="entry name" value="Chaperone_DnaK"/>
</dbReference>
<dbReference type="InterPro" id="IPR018181">
    <property type="entry name" value="Heat_shock_70_CS"/>
</dbReference>
<dbReference type="InterPro" id="IPR029048">
    <property type="entry name" value="HSP70_C_sf"/>
</dbReference>
<dbReference type="InterPro" id="IPR029047">
    <property type="entry name" value="HSP70_peptide-bd_sf"/>
</dbReference>
<dbReference type="InterPro" id="IPR013126">
    <property type="entry name" value="Hsp_70_fam"/>
</dbReference>
<dbReference type="NCBIfam" id="NF001413">
    <property type="entry name" value="PRK00290.1"/>
    <property type="match status" value="1"/>
</dbReference>
<dbReference type="NCBIfam" id="NF003520">
    <property type="entry name" value="PRK05183.1"/>
    <property type="match status" value="1"/>
</dbReference>
<dbReference type="NCBIfam" id="TIGR02350">
    <property type="entry name" value="prok_dnaK"/>
    <property type="match status" value="1"/>
</dbReference>
<dbReference type="PANTHER" id="PTHR19375">
    <property type="entry name" value="HEAT SHOCK PROTEIN 70KDA"/>
    <property type="match status" value="1"/>
</dbReference>
<dbReference type="Pfam" id="PF00012">
    <property type="entry name" value="HSP70"/>
    <property type="match status" value="1"/>
</dbReference>
<dbReference type="PRINTS" id="PR00301">
    <property type="entry name" value="HEATSHOCK70"/>
</dbReference>
<dbReference type="SUPFAM" id="SSF53067">
    <property type="entry name" value="Actin-like ATPase domain"/>
    <property type="match status" value="2"/>
</dbReference>
<dbReference type="SUPFAM" id="SSF100934">
    <property type="entry name" value="Heat shock protein 70kD (HSP70), C-terminal subdomain"/>
    <property type="match status" value="1"/>
</dbReference>
<dbReference type="SUPFAM" id="SSF100920">
    <property type="entry name" value="Heat shock protein 70kD (HSP70), peptide-binding domain"/>
    <property type="match status" value="1"/>
</dbReference>
<dbReference type="PROSITE" id="PS00297">
    <property type="entry name" value="HSP70_1"/>
    <property type="match status" value="1"/>
</dbReference>
<dbReference type="PROSITE" id="PS00329">
    <property type="entry name" value="HSP70_2"/>
    <property type="match status" value="1"/>
</dbReference>
<dbReference type="PROSITE" id="PS01036">
    <property type="entry name" value="HSP70_3"/>
    <property type="match status" value="1"/>
</dbReference>
<accession>Q3YRR6</accession>
<reference key="1">
    <citation type="journal article" date="2006" name="J. Bacteriol.">
        <title>The genome of the obligately intracellular bacterium Ehrlichia canis reveals themes of complex membrane structure and immune evasion strategies.</title>
        <authorList>
            <person name="Mavromatis K."/>
            <person name="Doyle C.K."/>
            <person name="Lykidis A."/>
            <person name="Ivanova N."/>
            <person name="Francino M.P."/>
            <person name="Chain P."/>
            <person name="Shin M."/>
            <person name="Malfatti S."/>
            <person name="Larimer F."/>
            <person name="Copeland A."/>
            <person name="Detter J.C."/>
            <person name="Land M."/>
            <person name="Richardson P.M."/>
            <person name="Yu X.J."/>
            <person name="Walker D.H."/>
            <person name="McBride J.W."/>
            <person name="Kyrpides N.C."/>
        </authorList>
    </citation>
    <scope>NUCLEOTIDE SEQUENCE [LARGE SCALE GENOMIC DNA]</scope>
    <source>
        <strain>Jake</strain>
    </source>
</reference>
<sequence length="634" mass="68963">MAVIGIDLGTTNSCVAVMEGGDAKAIENSEGARTTPSIVAFTDSERLVGDPAKRQATTNAKNTIYASKRLIGRRYQDVKDIKSSYEVVSAKNGDAWIKVLGKEYSPSQIGAFVLEKMKETAERHLGHKVEKAVITVPAYFNDAQRQATKDAGKIAGLDVIRIINEPTAAALAYGLNKSDKQKVIAVYDLGGGTFDVSILEIADGVFEVKATNGDTMLGGEDFDHAIMDYLMDDFKKTTGIDLHNDAMAVQRIKEASEKAKIELSNRMETDINLPFISSDSTGPKHLSLKLTRAKFENLVDDLIQRTIEPCKKALKDAGISADKIDEVVLVGGMTRVPKVIQKVKEFFGREPHKGVNPDEVVAIGAAIQGSILAGDVRDVLLLDVTPLSLGIETLGGVFTPLIERNTTIPTKKSQVFSTAEDGQTAVTIKVYQGERKMAADNKLLGQFSLEGIPSAPRGMPQIEVTFDIDANGIVHVSAKDKASGKEQAIKIQSSGGLSDDEIQRMIKEAEQKAGEDEKRKKFIELKNNGENLVHSTEKSLNEYGDKIPNSDRLEIENAIRDVRDALGNSDVESVDILQQKVDHLMKVSMKLGEALYGNANNTSSTESTTTNNNNEEDSKVVDSDYQEIDKKDGK</sequence>
<keyword id="KW-0067">ATP-binding</keyword>
<keyword id="KW-0143">Chaperone</keyword>
<keyword id="KW-0547">Nucleotide-binding</keyword>
<keyword id="KW-0597">Phosphoprotein</keyword>
<keyword id="KW-0346">Stress response</keyword>
<protein>
    <recommendedName>
        <fullName evidence="1">Chaperone protein DnaK</fullName>
    </recommendedName>
    <alternativeName>
        <fullName evidence="1">HSP70</fullName>
    </alternativeName>
    <alternativeName>
        <fullName evidence="1">Heat shock 70 kDa protein</fullName>
    </alternativeName>
    <alternativeName>
        <fullName evidence="1">Heat shock protein 70</fullName>
    </alternativeName>
</protein>